<comment type="function">
    <text evidence="1">Produces ATP from ADP in the presence of a proton gradient across the membrane. The catalytic sites are hosted primarily by the beta subunits.</text>
</comment>
<comment type="catalytic activity">
    <reaction evidence="1">
        <text>ATP + H2O + 4 H(+)(in) = ADP + phosphate + 5 H(+)(out)</text>
        <dbReference type="Rhea" id="RHEA:57720"/>
        <dbReference type="ChEBI" id="CHEBI:15377"/>
        <dbReference type="ChEBI" id="CHEBI:15378"/>
        <dbReference type="ChEBI" id="CHEBI:30616"/>
        <dbReference type="ChEBI" id="CHEBI:43474"/>
        <dbReference type="ChEBI" id="CHEBI:456216"/>
        <dbReference type="EC" id="7.1.2.2"/>
    </reaction>
</comment>
<comment type="subunit">
    <text evidence="1">F-type ATPases have 2 components, CF(1) - the catalytic core - and CF(0) - the membrane proton channel. CF(1) has five subunits: alpha(3), beta(3), gamma(1), delta(1), epsilon(1). CF(0) has four main subunits: a(1), b(1), b'(1) and c(9-12).</text>
</comment>
<comment type="subcellular location">
    <subcellularLocation>
        <location evidence="1">Plastid</location>
        <location evidence="1">Chloroplast thylakoid membrane</location>
        <topology evidence="1">Peripheral membrane protein</topology>
    </subcellularLocation>
</comment>
<comment type="similarity">
    <text evidence="1">Belongs to the ATPase alpha/beta chains family.</text>
</comment>
<protein>
    <recommendedName>
        <fullName evidence="1">ATP synthase subunit beta, chloroplastic</fullName>
        <ecNumber evidence="1">7.1.2.2</ecNumber>
    </recommendedName>
    <alternativeName>
        <fullName evidence="1">ATP synthase F1 sector subunit beta</fullName>
    </alternativeName>
    <alternativeName>
        <fullName evidence="1">F-ATPase subunit beta</fullName>
    </alternativeName>
</protein>
<accession>Q06SG7</accession>
<gene>
    <name evidence="1" type="primary">atpB</name>
</gene>
<sequence>MNIYTETNKNTGRLIQIIGPVVDIAFPAGNVPNIYNAVVISGKNTAGEDMCVTCEVQQLLGDRCVRAVAMNPTEGLMRGMDATDTGTPLMVPVGKTTLGRIFNVLGEPVDNLGPVETEQKLPIHRSAPAFTDLDTRLAIFETGIKVVDLLAPYRRGGKIGLFGGAGVGKTVLIMELINNIAKAHGGVSVFAGVGERTREGNDLYMEMKESGVINESNLSESKVALVYGQMNEPPGARMRVGLTALTMAEYFRDINKQDVLLFIDNIFRFVQAGSEVSALLGRMPSAVGYQPTLATEMGGLQERITSTKDGSITSIQAVYVPADDLTDPAPATTFAHLDATTVLSRGLAAKGIYPAVDPLDSTSTMLQPWIVGDEHYACAQKVKETLQRYKELQDIIAILGLDELSEEDRLLVARARKIERFLSQPFFVAEVFTGSPGKYVALAETIRGFKMVFAGELDSLPEQAFYLVGSIDEVIAKAAALTSK</sequence>
<name>ATPB_STIHE</name>
<geneLocation type="chloroplast"/>
<organism>
    <name type="scientific">Stigeoclonium helveticum</name>
    <name type="common">Green alga</name>
    <dbReference type="NCBI Taxonomy" id="55999"/>
    <lineage>
        <taxon>Eukaryota</taxon>
        <taxon>Viridiplantae</taxon>
        <taxon>Chlorophyta</taxon>
        <taxon>core chlorophytes</taxon>
        <taxon>Chlorophyceae</taxon>
        <taxon>OCC clade</taxon>
        <taxon>Chaetophorales</taxon>
        <taxon>Chaetophoraceae</taxon>
        <taxon>Stigeoclonium</taxon>
    </lineage>
</organism>
<feature type="chain" id="PRO_0000275188" description="ATP synthase subunit beta, chloroplastic">
    <location>
        <begin position="1"/>
        <end position="484"/>
    </location>
</feature>
<feature type="binding site" evidence="1">
    <location>
        <begin position="163"/>
        <end position="170"/>
    </location>
    <ligand>
        <name>ATP</name>
        <dbReference type="ChEBI" id="CHEBI:30616"/>
    </ligand>
</feature>
<reference key="1">
    <citation type="journal article" date="2006" name="Mol. Genet. Genomics">
        <title>Distinctive architecture of the chloroplast genome in the chlorophycean green alga Stigeoclonium helveticum.</title>
        <authorList>
            <person name="Belanger A.-S."/>
            <person name="Brouard J.-S."/>
            <person name="Charlebois P."/>
            <person name="Otis C."/>
            <person name="Lemieux C."/>
            <person name="Turmel M."/>
        </authorList>
    </citation>
    <scope>NUCLEOTIDE SEQUENCE [LARGE SCALE GENOMIC DNA]</scope>
    <source>
        <strain>UTEX 441</strain>
    </source>
</reference>
<dbReference type="EC" id="7.1.2.2" evidence="1"/>
<dbReference type="EMBL" id="DQ630521">
    <property type="protein sequence ID" value="ABF60147.1"/>
    <property type="molecule type" value="Genomic_DNA"/>
</dbReference>
<dbReference type="RefSeq" id="YP_764399.1">
    <property type="nucleotide sequence ID" value="NC_008372.1"/>
</dbReference>
<dbReference type="SMR" id="Q06SG7"/>
<dbReference type="GeneID" id="4308390"/>
<dbReference type="GO" id="GO:0009535">
    <property type="term" value="C:chloroplast thylakoid membrane"/>
    <property type="evidence" value="ECO:0007669"/>
    <property type="project" value="UniProtKB-SubCell"/>
</dbReference>
<dbReference type="GO" id="GO:0005739">
    <property type="term" value="C:mitochondrion"/>
    <property type="evidence" value="ECO:0007669"/>
    <property type="project" value="GOC"/>
</dbReference>
<dbReference type="GO" id="GO:0045259">
    <property type="term" value="C:proton-transporting ATP synthase complex"/>
    <property type="evidence" value="ECO:0007669"/>
    <property type="project" value="UniProtKB-KW"/>
</dbReference>
<dbReference type="GO" id="GO:0005524">
    <property type="term" value="F:ATP binding"/>
    <property type="evidence" value="ECO:0007669"/>
    <property type="project" value="UniProtKB-UniRule"/>
</dbReference>
<dbReference type="GO" id="GO:0016887">
    <property type="term" value="F:ATP hydrolysis activity"/>
    <property type="evidence" value="ECO:0007669"/>
    <property type="project" value="InterPro"/>
</dbReference>
<dbReference type="GO" id="GO:0046933">
    <property type="term" value="F:proton-transporting ATP synthase activity, rotational mechanism"/>
    <property type="evidence" value="ECO:0007669"/>
    <property type="project" value="UniProtKB-UniRule"/>
</dbReference>
<dbReference type="GO" id="GO:0042776">
    <property type="term" value="P:proton motive force-driven mitochondrial ATP synthesis"/>
    <property type="evidence" value="ECO:0007669"/>
    <property type="project" value="TreeGrafter"/>
</dbReference>
<dbReference type="CDD" id="cd18110">
    <property type="entry name" value="ATP-synt_F1_beta_C"/>
    <property type="match status" value="1"/>
</dbReference>
<dbReference type="CDD" id="cd18115">
    <property type="entry name" value="ATP-synt_F1_beta_N"/>
    <property type="match status" value="1"/>
</dbReference>
<dbReference type="CDD" id="cd01133">
    <property type="entry name" value="F1-ATPase_beta_CD"/>
    <property type="match status" value="1"/>
</dbReference>
<dbReference type="FunFam" id="1.10.1140.10:FF:000001">
    <property type="entry name" value="ATP synthase subunit beta"/>
    <property type="match status" value="1"/>
</dbReference>
<dbReference type="FunFam" id="3.40.50.12240:FF:000006">
    <property type="entry name" value="ATP synthase subunit beta"/>
    <property type="match status" value="1"/>
</dbReference>
<dbReference type="FunFam" id="3.40.50.300:FF:000026">
    <property type="entry name" value="ATP synthase subunit beta"/>
    <property type="match status" value="1"/>
</dbReference>
<dbReference type="FunFam" id="2.40.10.170:FF:000002">
    <property type="entry name" value="ATP synthase subunit beta, chloroplastic"/>
    <property type="match status" value="1"/>
</dbReference>
<dbReference type="Gene3D" id="2.40.10.170">
    <property type="match status" value="1"/>
</dbReference>
<dbReference type="Gene3D" id="1.10.1140.10">
    <property type="entry name" value="Bovine Mitochondrial F1-atpase, Atp Synthase Beta Chain, Chain D, domain 3"/>
    <property type="match status" value="1"/>
</dbReference>
<dbReference type="Gene3D" id="3.40.50.300">
    <property type="entry name" value="P-loop containing nucleotide triphosphate hydrolases"/>
    <property type="match status" value="1"/>
</dbReference>
<dbReference type="HAMAP" id="MF_01347">
    <property type="entry name" value="ATP_synth_beta_bact"/>
    <property type="match status" value="1"/>
</dbReference>
<dbReference type="InterPro" id="IPR003593">
    <property type="entry name" value="AAA+_ATPase"/>
</dbReference>
<dbReference type="InterPro" id="IPR055190">
    <property type="entry name" value="ATP-synt_VA_C"/>
</dbReference>
<dbReference type="InterPro" id="IPR005722">
    <property type="entry name" value="ATP_synth_F1_bsu"/>
</dbReference>
<dbReference type="InterPro" id="IPR020003">
    <property type="entry name" value="ATPase_a/bsu_AS"/>
</dbReference>
<dbReference type="InterPro" id="IPR050053">
    <property type="entry name" value="ATPase_alpha/beta_chains"/>
</dbReference>
<dbReference type="InterPro" id="IPR004100">
    <property type="entry name" value="ATPase_F1/V1/A1_a/bsu_N"/>
</dbReference>
<dbReference type="InterPro" id="IPR036121">
    <property type="entry name" value="ATPase_F1/V1/A1_a/bsu_N_sf"/>
</dbReference>
<dbReference type="InterPro" id="IPR000194">
    <property type="entry name" value="ATPase_F1/V1/A1_a/bsu_nucl-bd"/>
</dbReference>
<dbReference type="InterPro" id="IPR024034">
    <property type="entry name" value="ATPase_F1/V1_b/a_C"/>
</dbReference>
<dbReference type="InterPro" id="IPR027417">
    <property type="entry name" value="P-loop_NTPase"/>
</dbReference>
<dbReference type="NCBIfam" id="TIGR01039">
    <property type="entry name" value="atpD"/>
    <property type="match status" value="1"/>
</dbReference>
<dbReference type="PANTHER" id="PTHR15184">
    <property type="entry name" value="ATP SYNTHASE"/>
    <property type="match status" value="1"/>
</dbReference>
<dbReference type="PANTHER" id="PTHR15184:SF71">
    <property type="entry name" value="ATP SYNTHASE SUBUNIT BETA, MITOCHONDRIAL"/>
    <property type="match status" value="1"/>
</dbReference>
<dbReference type="Pfam" id="PF00006">
    <property type="entry name" value="ATP-synt_ab"/>
    <property type="match status" value="1"/>
</dbReference>
<dbReference type="Pfam" id="PF02874">
    <property type="entry name" value="ATP-synt_ab_N"/>
    <property type="match status" value="1"/>
</dbReference>
<dbReference type="Pfam" id="PF22919">
    <property type="entry name" value="ATP-synt_VA_C"/>
    <property type="match status" value="1"/>
</dbReference>
<dbReference type="SMART" id="SM00382">
    <property type="entry name" value="AAA"/>
    <property type="match status" value="1"/>
</dbReference>
<dbReference type="SUPFAM" id="SSF47917">
    <property type="entry name" value="C-terminal domain of alpha and beta subunits of F1 ATP synthase"/>
    <property type="match status" value="1"/>
</dbReference>
<dbReference type="SUPFAM" id="SSF50615">
    <property type="entry name" value="N-terminal domain of alpha and beta subunits of F1 ATP synthase"/>
    <property type="match status" value="1"/>
</dbReference>
<dbReference type="SUPFAM" id="SSF52540">
    <property type="entry name" value="P-loop containing nucleoside triphosphate hydrolases"/>
    <property type="match status" value="1"/>
</dbReference>
<dbReference type="PROSITE" id="PS00152">
    <property type="entry name" value="ATPASE_ALPHA_BETA"/>
    <property type="match status" value="1"/>
</dbReference>
<evidence type="ECO:0000255" key="1">
    <source>
        <dbReference type="HAMAP-Rule" id="MF_01347"/>
    </source>
</evidence>
<keyword id="KW-0066">ATP synthesis</keyword>
<keyword id="KW-0067">ATP-binding</keyword>
<keyword id="KW-0139">CF(1)</keyword>
<keyword id="KW-0150">Chloroplast</keyword>
<keyword id="KW-0375">Hydrogen ion transport</keyword>
<keyword id="KW-0406">Ion transport</keyword>
<keyword id="KW-0472">Membrane</keyword>
<keyword id="KW-0547">Nucleotide-binding</keyword>
<keyword id="KW-0934">Plastid</keyword>
<keyword id="KW-0793">Thylakoid</keyword>
<keyword id="KW-1278">Translocase</keyword>
<keyword id="KW-0813">Transport</keyword>
<proteinExistence type="inferred from homology"/>